<sequence>MARIAGVDLPNKKRIEYGLTYIYGIGLYKSRQILDAAGISYDKRVFELSEDEAAAIRKEIQEHHIVEGDLRKQVAMDIKALMDLGSYRGLRHRKGLPVRGQKTKTNARTRKGRRKTVGAATK</sequence>
<feature type="chain" id="PRO_1000051874" description="Small ribosomal subunit protein uS13">
    <location>
        <begin position="1"/>
        <end position="122"/>
    </location>
</feature>
<feature type="region of interest" description="Disordered" evidence="2">
    <location>
        <begin position="95"/>
        <end position="122"/>
    </location>
</feature>
<feature type="compositionally biased region" description="Basic residues" evidence="2">
    <location>
        <begin position="95"/>
        <end position="116"/>
    </location>
</feature>
<accession>A7H0Z2</accession>
<protein>
    <recommendedName>
        <fullName evidence="1">Small ribosomal subunit protein uS13</fullName>
    </recommendedName>
    <alternativeName>
        <fullName evidence="3">30S ribosomal protein S13</fullName>
    </alternativeName>
</protein>
<organism>
    <name type="scientific">Campylobacter curvus (strain 525.92)</name>
    <dbReference type="NCBI Taxonomy" id="360105"/>
    <lineage>
        <taxon>Bacteria</taxon>
        <taxon>Pseudomonadati</taxon>
        <taxon>Campylobacterota</taxon>
        <taxon>Epsilonproteobacteria</taxon>
        <taxon>Campylobacterales</taxon>
        <taxon>Campylobacteraceae</taxon>
        <taxon>Campylobacter</taxon>
    </lineage>
</organism>
<gene>
    <name evidence="1" type="primary">rpsM</name>
    <name type="ordered locus">Ccur92_18300</name>
    <name type="ORF">CCV52592_1011</name>
</gene>
<name>RS13_CAMC5</name>
<reference key="1">
    <citation type="submission" date="2007-07" db="EMBL/GenBank/DDBJ databases">
        <title>Genome sequence of Campylobacter curvus 525.92 isolated from human feces.</title>
        <authorList>
            <person name="Fouts D.E."/>
            <person name="Mongodin E.F."/>
            <person name="Puiu D."/>
            <person name="Sebastian Y."/>
            <person name="Miller W.G."/>
            <person name="Mandrell R.E."/>
            <person name="Lastovica A.J."/>
            <person name="Nelson K.E."/>
        </authorList>
    </citation>
    <scope>NUCLEOTIDE SEQUENCE [LARGE SCALE GENOMIC DNA]</scope>
    <source>
        <strain>525.92</strain>
    </source>
</reference>
<evidence type="ECO:0000255" key="1">
    <source>
        <dbReference type="HAMAP-Rule" id="MF_01315"/>
    </source>
</evidence>
<evidence type="ECO:0000256" key="2">
    <source>
        <dbReference type="SAM" id="MobiDB-lite"/>
    </source>
</evidence>
<evidence type="ECO:0000305" key="3"/>
<keyword id="KW-1185">Reference proteome</keyword>
<keyword id="KW-0687">Ribonucleoprotein</keyword>
<keyword id="KW-0689">Ribosomal protein</keyword>
<keyword id="KW-0694">RNA-binding</keyword>
<keyword id="KW-0699">rRNA-binding</keyword>
<keyword id="KW-0820">tRNA-binding</keyword>
<proteinExistence type="inferred from homology"/>
<comment type="function">
    <text evidence="1">Located at the top of the head of the 30S subunit, it contacts several helices of the 16S rRNA. In the 70S ribosome it contacts the 23S rRNA (bridge B1a) and protein L5 of the 50S subunit (bridge B1b), connecting the 2 subunits; these bridges are implicated in subunit movement. Contacts the tRNAs in the A and P-sites.</text>
</comment>
<comment type="subunit">
    <text evidence="1">Part of the 30S ribosomal subunit. Forms a loose heterodimer with protein S19. Forms two bridges to the 50S subunit in the 70S ribosome.</text>
</comment>
<comment type="similarity">
    <text evidence="1">Belongs to the universal ribosomal protein uS13 family.</text>
</comment>
<dbReference type="EMBL" id="CP000767">
    <property type="protein sequence ID" value="EAT99615.1"/>
    <property type="molecule type" value="Genomic_DNA"/>
</dbReference>
<dbReference type="RefSeq" id="WP_009649750.1">
    <property type="nucleotide sequence ID" value="NC_009715.2"/>
</dbReference>
<dbReference type="SMR" id="A7H0Z2"/>
<dbReference type="STRING" id="360105.CCV52592_1011"/>
<dbReference type="GeneID" id="61003075"/>
<dbReference type="KEGG" id="ccv:CCV52592_1011"/>
<dbReference type="HOGENOM" id="CLU_103849_1_2_7"/>
<dbReference type="OrthoDB" id="9803610at2"/>
<dbReference type="Proteomes" id="UP000006380">
    <property type="component" value="Chromosome"/>
</dbReference>
<dbReference type="GO" id="GO:0005829">
    <property type="term" value="C:cytosol"/>
    <property type="evidence" value="ECO:0007669"/>
    <property type="project" value="TreeGrafter"/>
</dbReference>
<dbReference type="GO" id="GO:0015935">
    <property type="term" value="C:small ribosomal subunit"/>
    <property type="evidence" value="ECO:0007669"/>
    <property type="project" value="TreeGrafter"/>
</dbReference>
<dbReference type="GO" id="GO:0019843">
    <property type="term" value="F:rRNA binding"/>
    <property type="evidence" value="ECO:0007669"/>
    <property type="project" value="UniProtKB-UniRule"/>
</dbReference>
<dbReference type="GO" id="GO:0003735">
    <property type="term" value="F:structural constituent of ribosome"/>
    <property type="evidence" value="ECO:0007669"/>
    <property type="project" value="InterPro"/>
</dbReference>
<dbReference type="GO" id="GO:0000049">
    <property type="term" value="F:tRNA binding"/>
    <property type="evidence" value="ECO:0007669"/>
    <property type="project" value="UniProtKB-UniRule"/>
</dbReference>
<dbReference type="GO" id="GO:0006412">
    <property type="term" value="P:translation"/>
    <property type="evidence" value="ECO:0007669"/>
    <property type="project" value="UniProtKB-UniRule"/>
</dbReference>
<dbReference type="FunFam" id="1.10.8.50:FF:000001">
    <property type="entry name" value="30S ribosomal protein S13"/>
    <property type="match status" value="1"/>
</dbReference>
<dbReference type="FunFam" id="4.10.910.10:FF:000001">
    <property type="entry name" value="30S ribosomal protein S13"/>
    <property type="match status" value="1"/>
</dbReference>
<dbReference type="Gene3D" id="1.10.8.50">
    <property type="match status" value="1"/>
</dbReference>
<dbReference type="Gene3D" id="4.10.910.10">
    <property type="entry name" value="30s ribosomal protein s13, domain 2"/>
    <property type="match status" value="1"/>
</dbReference>
<dbReference type="HAMAP" id="MF_01315">
    <property type="entry name" value="Ribosomal_uS13"/>
    <property type="match status" value="1"/>
</dbReference>
<dbReference type="InterPro" id="IPR027437">
    <property type="entry name" value="Rbsml_uS13_C"/>
</dbReference>
<dbReference type="InterPro" id="IPR001892">
    <property type="entry name" value="Ribosomal_uS13"/>
</dbReference>
<dbReference type="InterPro" id="IPR010979">
    <property type="entry name" value="Ribosomal_uS13-like_H2TH"/>
</dbReference>
<dbReference type="InterPro" id="IPR019980">
    <property type="entry name" value="Ribosomal_uS13_bac-type"/>
</dbReference>
<dbReference type="InterPro" id="IPR018269">
    <property type="entry name" value="Ribosomal_uS13_CS"/>
</dbReference>
<dbReference type="NCBIfam" id="TIGR03631">
    <property type="entry name" value="uS13_bact"/>
    <property type="match status" value="1"/>
</dbReference>
<dbReference type="PANTHER" id="PTHR10871">
    <property type="entry name" value="30S RIBOSOMAL PROTEIN S13/40S RIBOSOMAL PROTEIN S18"/>
    <property type="match status" value="1"/>
</dbReference>
<dbReference type="PANTHER" id="PTHR10871:SF1">
    <property type="entry name" value="SMALL RIBOSOMAL SUBUNIT PROTEIN US13M"/>
    <property type="match status" value="1"/>
</dbReference>
<dbReference type="Pfam" id="PF00416">
    <property type="entry name" value="Ribosomal_S13"/>
    <property type="match status" value="1"/>
</dbReference>
<dbReference type="PIRSF" id="PIRSF002134">
    <property type="entry name" value="Ribosomal_S13"/>
    <property type="match status" value="1"/>
</dbReference>
<dbReference type="SUPFAM" id="SSF46946">
    <property type="entry name" value="S13-like H2TH domain"/>
    <property type="match status" value="1"/>
</dbReference>
<dbReference type="PROSITE" id="PS00646">
    <property type="entry name" value="RIBOSOMAL_S13_1"/>
    <property type="match status" value="1"/>
</dbReference>
<dbReference type="PROSITE" id="PS50159">
    <property type="entry name" value="RIBOSOMAL_S13_2"/>
    <property type="match status" value="1"/>
</dbReference>